<proteinExistence type="inferred from homology"/>
<name>SAT_LYSSC</name>
<gene>
    <name evidence="1" type="primary">sat</name>
    <name type="ordered locus">Bsph_0600</name>
</gene>
<keyword id="KW-0067">ATP-binding</keyword>
<keyword id="KW-0547">Nucleotide-binding</keyword>
<keyword id="KW-0548">Nucleotidyltransferase</keyword>
<keyword id="KW-0808">Transferase</keyword>
<dbReference type="EC" id="2.7.7.4" evidence="1"/>
<dbReference type="EMBL" id="CP000817">
    <property type="protein sequence ID" value="ACA38223.1"/>
    <property type="molecule type" value="Genomic_DNA"/>
</dbReference>
<dbReference type="RefSeq" id="WP_012292374.1">
    <property type="nucleotide sequence ID" value="NC_010382.1"/>
</dbReference>
<dbReference type="SMR" id="B1HXC8"/>
<dbReference type="EnsemblBacteria" id="ACA38223">
    <property type="protein sequence ID" value="ACA38223"/>
    <property type="gene ID" value="Bsph_0600"/>
</dbReference>
<dbReference type="KEGG" id="lsp:Bsph_0600"/>
<dbReference type="HOGENOM" id="CLU_022950_1_1_9"/>
<dbReference type="UniPathway" id="UPA00140">
    <property type="reaction ID" value="UER00204"/>
</dbReference>
<dbReference type="Proteomes" id="UP000002164">
    <property type="component" value="Chromosome"/>
</dbReference>
<dbReference type="GO" id="GO:0005524">
    <property type="term" value="F:ATP binding"/>
    <property type="evidence" value="ECO:0007669"/>
    <property type="project" value="UniProtKB-KW"/>
</dbReference>
<dbReference type="GO" id="GO:0004781">
    <property type="term" value="F:sulfate adenylyltransferase (ATP) activity"/>
    <property type="evidence" value="ECO:0007669"/>
    <property type="project" value="UniProtKB-UniRule"/>
</dbReference>
<dbReference type="GO" id="GO:0070814">
    <property type="term" value="P:hydrogen sulfide biosynthetic process"/>
    <property type="evidence" value="ECO:0007669"/>
    <property type="project" value="UniProtKB-UniRule"/>
</dbReference>
<dbReference type="GO" id="GO:0000103">
    <property type="term" value="P:sulfate assimilation"/>
    <property type="evidence" value="ECO:0007669"/>
    <property type="project" value="UniProtKB-UniRule"/>
</dbReference>
<dbReference type="CDD" id="cd00517">
    <property type="entry name" value="ATPS"/>
    <property type="match status" value="1"/>
</dbReference>
<dbReference type="Gene3D" id="3.40.50.620">
    <property type="entry name" value="HUPs"/>
    <property type="match status" value="1"/>
</dbReference>
<dbReference type="Gene3D" id="3.10.400.10">
    <property type="entry name" value="Sulfate adenylyltransferase"/>
    <property type="match status" value="1"/>
</dbReference>
<dbReference type="HAMAP" id="MF_00066">
    <property type="entry name" value="Sulf_adenylyltr"/>
    <property type="match status" value="1"/>
</dbReference>
<dbReference type="InterPro" id="IPR025980">
    <property type="entry name" value="ATP-Sase_PUA-like_dom"/>
</dbReference>
<dbReference type="InterPro" id="IPR015947">
    <property type="entry name" value="PUA-like_sf"/>
</dbReference>
<dbReference type="InterPro" id="IPR014729">
    <property type="entry name" value="Rossmann-like_a/b/a_fold"/>
</dbReference>
<dbReference type="InterPro" id="IPR020792">
    <property type="entry name" value="SO4_adenylyltransferase_pro"/>
</dbReference>
<dbReference type="InterPro" id="IPR024951">
    <property type="entry name" value="Sulfurylase_cat_dom"/>
</dbReference>
<dbReference type="InterPro" id="IPR002650">
    <property type="entry name" value="Sulphate_adenylyltransferase"/>
</dbReference>
<dbReference type="NCBIfam" id="NF003166">
    <property type="entry name" value="PRK04149.1"/>
    <property type="match status" value="1"/>
</dbReference>
<dbReference type="NCBIfam" id="TIGR00339">
    <property type="entry name" value="sopT"/>
    <property type="match status" value="1"/>
</dbReference>
<dbReference type="PANTHER" id="PTHR43509">
    <property type="match status" value="1"/>
</dbReference>
<dbReference type="PANTHER" id="PTHR43509:SF1">
    <property type="entry name" value="SULFATE ADENYLYLTRANSFERASE"/>
    <property type="match status" value="1"/>
</dbReference>
<dbReference type="Pfam" id="PF01747">
    <property type="entry name" value="ATP-sulfurylase"/>
    <property type="match status" value="1"/>
</dbReference>
<dbReference type="Pfam" id="PF14306">
    <property type="entry name" value="PUA_2"/>
    <property type="match status" value="1"/>
</dbReference>
<dbReference type="SUPFAM" id="SSF52374">
    <property type="entry name" value="Nucleotidylyl transferase"/>
    <property type="match status" value="1"/>
</dbReference>
<dbReference type="SUPFAM" id="SSF88697">
    <property type="entry name" value="PUA domain-like"/>
    <property type="match status" value="1"/>
</dbReference>
<feature type="chain" id="PRO_1000092257" description="Sulfate adenylyltransferase">
    <location>
        <begin position="1"/>
        <end position="379"/>
    </location>
</feature>
<reference key="1">
    <citation type="journal article" date="2008" name="J. Bacteriol.">
        <title>Complete genome sequence of the mosquitocidal bacterium Bacillus sphaericus C3-41 and comparison with those of closely related Bacillus species.</title>
        <authorList>
            <person name="Hu X."/>
            <person name="Fan W."/>
            <person name="Han B."/>
            <person name="Liu H."/>
            <person name="Zheng D."/>
            <person name="Li Q."/>
            <person name="Dong W."/>
            <person name="Yan J."/>
            <person name="Gao M."/>
            <person name="Berry C."/>
            <person name="Yuan Z."/>
        </authorList>
    </citation>
    <scope>NUCLEOTIDE SEQUENCE [LARGE SCALE GENOMIC DNA]</scope>
    <source>
        <strain>C3-41</strain>
    </source>
</reference>
<protein>
    <recommendedName>
        <fullName evidence="1">Sulfate adenylyltransferase</fullName>
        <ecNumber evidence="1">2.7.7.4</ecNumber>
    </recommendedName>
    <alternativeName>
        <fullName evidence="1">ATP-sulfurylase</fullName>
    </alternativeName>
    <alternativeName>
        <fullName evidence="1">Sulfate adenylate transferase</fullName>
        <shortName evidence="1">SAT</shortName>
    </alternativeName>
</protein>
<organism>
    <name type="scientific">Lysinibacillus sphaericus (strain C3-41)</name>
    <dbReference type="NCBI Taxonomy" id="444177"/>
    <lineage>
        <taxon>Bacteria</taxon>
        <taxon>Bacillati</taxon>
        <taxon>Bacillota</taxon>
        <taxon>Bacilli</taxon>
        <taxon>Bacillales</taxon>
        <taxon>Bacillaceae</taxon>
        <taxon>Lysinibacillus</taxon>
    </lineage>
</organism>
<comment type="catalytic activity">
    <reaction evidence="1">
        <text>sulfate + ATP + H(+) = adenosine 5'-phosphosulfate + diphosphate</text>
        <dbReference type="Rhea" id="RHEA:18133"/>
        <dbReference type="ChEBI" id="CHEBI:15378"/>
        <dbReference type="ChEBI" id="CHEBI:16189"/>
        <dbReference type="ChEBI" id="CHEBI:30616"/>
        <dbReference type="ChEBI" id="CHEBI:33019"/>
        <dbReference type="ChEBI" id="CHEBI:58243"/>
        <dbReference type="EC" id="2.7.7.4"/>
    </reaction>
</comment>
<comment type="pathway">
    <text evidence="1">Sulfur metabolism; hydrogen sulfide biosynthesis; sulfite from sulfate: step 1/3.</text>
</comment>
<comment type="similarity">
    <text evidence="1">Belongs to the sulfate adenylyltransferase family.</text>
</comment>
<accession>B1HXC8</accession>
<evidence type="ECO:0000255" key="1">
    <source>
        <dbReference type="HAMAP-Rule" id="MF_00066"/>
    </source>
</evidence>
<sequence>MSLQPHGGFLVQAFHPDKEITSIHKEIELDAISLSDLELIAIGGYSPIQGFLTQADYESVVEKSRLVSGIVWSIPITLPVTEEKAATLQPGEEVKLVYQGETFGVIQVADIFEPNKRKEALLVYGTEDLAHPGVHKLHERPAIYVGGKITLIKRLAQKFPTYSFDPVETRQLFASKGWQTIVGFQTRNPVHRAHEYIQKAALETIDGLFLNPLVGETKSDDVSAAIRMESYEILLKNYYPENRVQLGVFPAAMRYAGPREAIFHALVRKNYGCTHFIVGRDHAGVGDYYGTYDAQKIFEQFKEDELGIIPLKFEHSFYCQQCEGMATTKTCPHDSSAHIILSGTKVREMLRNGEVPPSTFSRKEVVDVLIKGMQKEVVK</sequence>